<name>FM522_NEOFI</name>
<feature type="transit peptide" description="Mitochondrion">
    <location>
        <begin position="1"/>
        <end position="46"/>
    </location>
</feature>
<feature type="chain" id="PRO_0000301826" description="Protein fmp52-2, mitochondrial">
    <location>
        <begin position="47"/>
        <end position="231"/>
    </location>
</feature>
<organism>
    <name type="scientific">Neosartorya fischeri (strain ATCC 1020 / DSM 3700 / CBS 544.65 / FGSC A1164 / JCM 1740 / NRRL 181 / WB 181)</name>
    <name type="common">Aspergillus fischerianus</name>
    <dbReference type="NCBI Taxonomy" id="331117"/>
    <lineage>
        <taxon>Eukaryota</taxon>
        <taxon>Fungi</taxon>
        <taxon>Dikarya</taxon>
        <taxon>Ascomycota</taxon>
        <taxon>Pezizomycotina</taxon>
        <taxon>Eurotiomycetes</taxon>
        <taxon>Eurotiomycetidae</taxon>
        <taxon>Eurotiales</taxon>
        <taxon>Aspergillaceae</taxon>
        <taxon>Aspergillus</taxon>
        <taxon>Aspergillus subgen. Fumigati</taxon>
    </lineage>
</organism>
<protein>
    <recommendedName>
        <fullName>Protein fmp52-2, mitochondrial</fullName>
    </recommendedName>
</protein>
<gene>
    <name type="primary">fmp522</name>
    <name type="ORF">NFIA_033240</name>
</gene>
<reference key="1">
    <citation type="journal article" date="2008" name="PLoS Genet.">
        <title>Genomic islands in the pathogenic filamentous fungus Aspergillus fumigatus.</title>
        <authorList>
            <person name="Fedorova N.D."/>
            <person name="Khaldi N."/>
            <person name="Joardar V.S."/>
            <person name="Maiti R."/>
            <person name="Amedeo P."/>
            <person name="Anderson M.J."/>
            <person name="Crabtree J."/>
            <person name="Silva J.C."/>
            <person name="Badger J.H."/>
            <person name="Albarraq A."/>
            <person name="Angiuoli S."/>
            <person name="Bussey H."/>
            <person name="Bowyer P."/>
            <person name="Cotty P.J."/>
            <person name="Dyer P.S."/>
            <person name="Egan A."/>
            <person name="Galens K."/>
            <person name="Fraser-Liggett C.M."/>
            <person name="Haas B.J."/>
            <person name="Inman J.M."/>
            <person name="Kent R."/>
            <person name="Lemieux S."/>
            <person name="Malavazi I."/>
            <person name="Orvis J."/>
            <person name="Roemer T."/>
            <person name="Ronning C.M."/>
            <person name="Sundaram J.P."/>
            <person name="Sutton G."/>
            <person name="Turner G."/>
            <person name="Venter J.C."/>
            <person name="White O.R."/>
            <person name="Whitty B.R."/>
            <person name="Youngman P."/>
            <person name="Wolfe K.H."/>
            <person name="Goldman G.H."/>
            <person name="Wortman J.R."/>
            <person name="Jiang B."/>
            <person name="Denning D.W."/>
            <person name="Nierman W.C."/>
        </authorList>
    </citation>
    <scope>NUCLEOTIDE SEQUENCE [LARGE SCALE GENOMIC DNA]</scope>
    <source>
        <strain>ATCC 1020 / DSM 3700 / CBS 544.65 / FGSC A1164 / JCM 1740 / NRRL 181 / WB 181</strain>
    </source>
</reference>
<dbReference type="EMBL" id="DS027686">
    <property type="protein sequence ID" value="EAW23758.1"/>
    <property type="molecule type" value="Genomic_DNA"/>
</dbReference>
<dbReference type="RefSeq" id="XP_001265655.1">
    <property type="nucleotide sequence ID" value="XM_001265654.1"/>
</dbReference>
<dbReference type="SMR" id="A1CYD8"/>
<dbReference type="STRING" id="331117.A1CYD8"/>
<dbReference type="EnsemblFungi" id="EAW23758">
    <property type="protein sequence ID" value="EAW23758"/>
    <property type="gene ID" value="NFIA_033240"/>
</dbReference>
<dbReference type="GeneID" id="4592861"/>
<dbReference type="KEGG" id="nfi:NFIA_033240"/>
<dbReference type="VEuPathDB" id="FungiDB:NFIA_033240"/>
<dbReference type="eggNOG" id="KOG4039">
    <property type="taxonomic scope" value="Eukaryota"/>
</dbReference>
<dbReference type="HOGENOM" id="CLU_071330_3_0_1"/>
<dbReference type="OMA" id="CIENAKA"/>
<dbReference type="OrthoDB" id="430436at2759"/>
<dbReference type="Proteomes" id="UP000006702">
    <property type="component" value="Unassembled WGS sequence"/>
</dbReference>
<dbReference type="GO" id="GO:0005741">
    <property type="term" value="C:mitochondrial outer membrane"/>
    <property type="evidence" value="ECO:0007669"/>
    <property type="project" value="UniProtKB-SubCell"/>
</dbReference>
<dbReference type="GO" id="GO:0051170">
    <property type="term" value="P:import into nucleus"/>
    <property type="evidence" value="ECO:0007669"/>
    <property type="project" value="TreeGrafter"/>
</dbReference>
<dbReference type="FunFam" id="3.40.50.720:FF:000366">
    <property type="entry name" value="Protein FMP52, mitochondrial"/>
    <property type="match status" value="1"/>
</dbReference>
<dbReference type="Gene3D" id="3.40.50.720">
    <property type="entry name" value="NAD(P)-binding Rossmann-like Domain"/>
    <property type="match status" value="1"/>
</dbReference>
<dbReference type="InterPro" id="IPR001509">
    <property type="entry name" value="Epimerase_deHydtase"/>
</dbReference>
<dbReference type="InterPro" id="IPR036291">
    <property type="entry name" value="NAD(P)-bd_dom_sf"/>
</dbReference>
<dbReference type="PANTHER" id="PTHR14097">
    <property type="entry name" value="OXIDOREDUCTASE HTATIP2"/>
    <property type="match status" value="1"/>
</dbReference>
<dbReference type="PANTHER" id="PTHR14097:SF7">
    <property type="entry name" value="OXIDOREDUCTASE HTATIP2"/>
    <property type="match status" value="1"/>
</dbReference>
<dbReference type="Pfam" id="PF01370">
    <property type="entry name" value="Epimerase"/>
    <property type="match status" value="1"/>
</dbReference>
<dbReference type="SUPFAM" id="SSF51735">
    <property type="entry name" value="NAD(P)-binding Rossmann-fold domains"/>
    <property type="match status" value="1"/>
</dbReference>
<evidence type="ECO:0000250" key="1"/>
<evidence type="ECO:0000305" key="2"/>
<keyword id="KW-0472">Membrane</keyword>
<keyword id="KW-0496">Mitochondrion</keyword>
<keyword id="KW-1000">Mitochondrion outer membrane</keyword>
<keyword id="KW-1185">Reference proteome</keyword>
<keyword id="KW-0809">Transit peptide</keyword>
<accession>A1CYD8</accession>
<sequence length="231" mass="24750">MTMTTAAVFGCTGAVGSQILATLLAIDTFPSVKTISRRLPNVQSPKLEAIEEGDSSKWGGMISSFSPKPSVVFNAVGTTRAAAGGLQNQWKIDHDLCIENARAAKEAGVKTYVFISGAGIRGFVARYLPFSKMKIGVEDAIKDLDFEHAIILRPGMIIGRENPKSALLENIVGGLNKLGQGIQDSLGQDQTVIARAAVAAARMADEGKAPSKYWVVEMADIVRLGRDEWKE</sequence>
<proteinExistence type="inferred from homology"/>
<comment type="subcellular location">
    <subcellularLocation>
        <location evidence="1">Mitochondrion outer membrane</location>
        <topology evidence="1">Peripheral membrane protein</topology>
    </subcellularLocation>
</comment>
<comment type="similarity">
    <text evidence="2">Belongs to the FMP52 family.</text>
</comment>